<organism>
    <name type="scientific">Danio rerio</name>
    <name type="common">Zebrafish</name>
    <name type="synonym">Brachydanio rerio</name>
    <dbReference type="NCBI Taxonomy" id="7955"/>
    <lineage>
        <taxon>Eukaryota</taxon>
        <taxon>Metazoa</taxon>
        <taxon>Chordata</taxon>
        <taxon>Craniata</taxon>
        <taxon>Vertebrata</taxon>
        <taxon>Euteleostomi</taxon>
        <taxon>Actinopterygii</taxon>
        <taxon>Neopterygii</taxon>
        <taxon>Teleostei</taxon>
        <taxon>Ostariophysi</taxon>
        <taxon>Cypriniformes</taxon>
        <taxon>Danionidae</taxon>
        <taxon>Danioninae</taxon>
        <taxon>Danio</taxon>
    </lineage>
</organism>
<evidence type="ECO:0000250" key="1"/>
<evidence type="ECO:0000255" key="2">
    <source>
        <dbReference type="PROSITE-ProRule" id="PRU00407"/>
    </source>
</evidence>
<evidence type="ECO:0000255" key="3">
    <source>
        <dbReference type="PROSITE-ProRule" id="PRU01189"/>
    </source>
</evidence>
<evidence type="ECO:0000256" key="4">
    <source>
        <dbReference type="SAM" id="MobiDB-lite"/>
    </source>
</evidence>
<evidence type="ECO:0000305" key="5"/>
<proteinExistence type="evidence at transcript level"/>
<name>ESR1_DANRE</name>
<keyword id="KW-0238">DNA-binding</keyword>
<keyword id="KW-0446">Lipid-binding</keyword>
<keyword id="KW-0479">Metal-binding</keyword>
<keyword id="KW-0539">Nucleus</keyword>
<keyword id="KW-0675">Receptor</keyword>
<keyword id="KW-1185">Reference proteome</keyword>
<keyword id="KW-0754">Steroid-binding</keyword>
<keyword id="KW-0804">Transcription</keyword>
<keyword id="KW-0805">Transcription regulation</keyword>
<keyword id="KW-0862">Zinc</keyword>
<keyword id="KW-0863">Zinc-finger</keyword>
<comment type="function">
    <text>The steroid hormones and their receptors are involved in the regulation of eukaryotic gene expression and affect cellular proliferation and differentiation in target tissues.</text>
</comment>
<comment type="subunit">
    <text evidence="1">Binds DNA as a homodimer. Can form a heterodimer with ER-beta (By similarity).</text>
</comment>
<comment type="subcellular location">
    <subcellularLocation>
        <location>Nucleus</location>
    </subcellularLocation>
</comment>
<comment type="domain">
    <text>Composed of three domains: a modulating N-terminal domain, a DNA-binding domain and a C-terminal ligand-binding domain.</text>
</comment>
<comment type="similarity">
    <text evidence="5">Belongs to the nuclear hormone receptor family. NR3 subfamily.</text>
</comment>
<protein>
    <recommendedName>
        <fullName>Estrogen receptor</fullName>
        <shortName>ER</shortName>
    </recommendedName>
    <alternativeName>
        <fullName>ER-alpha</fullName>
    </alternativeName>
    <alternativeName>
        <fullName>Estradiol receptor</fullName>
    </alternativeName>
    <alternativeName>
        <fullName>Nuclear receptor subfamily 3 group A member 1</fullName>
    </alternativeName>
</protein>
<gene>
    <name type="primary">esr1</name>
    <name type="synonym">esr</name>
    <name type="synonym">nr3a1</name>
</gene>
<reference key="1">
    <citation type="submission" date="2000-01" db="EMBL/GenBank/DDBJ databases">
        <authorList>
            <person name="Morimoto J."/>
            <person name="Miyasho T."/>
            <person name="Iwano H."/>
            <person name="Teraoka H."/>
            <person name="Hiraga T."/>
            <person name="Yokota H."/>
        </authorList>
    </citation>
    <scope>NUCLEOTIDE SEQUENCE [MRNA]</scope>
</reference>
<reference key="2">
    <citation type="submission" date="2001-02" db="EMBL/GenBank/DDBJ databases">
        <title>Estrogen receptor cDNAs in zebrafish.</title>
        <authorList>
            <person name="Akten B."/>
            <person name="Kishida M."/>
            <person name="Callard G.V."/>
        </authorList>
    </citation>
    <scope>NUCLEOTIDE SEQUENCE [MRNA]</scope>
    <source>
        <tissue>Liver</tissue>
    </source>
</reference>
<accession>P57717</accession>
<accession>Q98SM9</accession>
<feature type="chain" id="PRO_0000053628" description="Estrogen receptor">
    <location>
        <begin position="1"/>
        <end position="569"/>
    </location>
</feature>
<feature type="domain" description="NR LBD" evidence="3">
    <location>
        <begin position="279"/>
        <end position="515"/>
    </location>
</feature>
<feature type="DNA-binding region" description="Nuclear receptor" evidence="2">
    <location>
        <begin position="152"/>
        <end position="217"/>
    </location>
</feature>
<feature type="zinc finger region" description="NR C4-type" evidence="2">
    <location>
        <begin position="152"/>
        <end position="172"/>
    </location>
</feature>
<feature type="zinc finger region" description="NR C4-type" evidence="2">
    <location>
        <begin position="188"/>
        <end position="212"/>
    </location>
</feature>
<feature type="region of interest" description="Modulating" evidence="1">
    <location>
        <begin position="1"/>
        <end position="151"/>
    </location>
</feature>
<feature type="region of interest" description="Disordered" evidence="4">
    <location>
        <begin position="28"/>
        <end position="65"/>
    </location>
</feature>
<feature type="region of interest" description="Hinge">
    <location>
        <begin position="218"/>
        <end position="278"/>
    </location>
</feature>
<feature type="region of interest" description="Disordered" evidence="4">
    <location>
        <begin position="223"/>
        <end position="271"/>
    </location>
</feature>
<feature type="region of interest" description="Disordered" evidence="4">
    <location>
        <begin position="523"/>
        <end position="569"/>
    </location>
</feature>
<feature type="compositionally biased region" description="Polar residues" evidence="4">
    <location>
        <begin position="28"/>
        <end position="37"/>
    </location>
</feature>
<feature type="compositionally biased region" description="Basic and acidic residues" evidence="4">
    <location>
        <begin position="237"/>
        <end position="247"/>
    </location>
</feature>
<feature type="compositionally biased region" description="Polar residues" evidence="4">
    <location>
        <begin position="523"/>
        <end position="532"/>
    </location>
</feature>
<feature type="compositionally biased region" description="Low complexity" evidence="4">
    <location>
        <begin position="538"/>
        <end position="549"/>
    </location>
</feature>
<feature type="sequence conflict" description="In Ref. 1; BAB16893." evidence="5" ref="1">
    <original>T</original>
    <variation>A</variation>
    <location>
        <position position="31"/>
    </location>
</feature>
<feature type="sequence conflict" description="In Ref. 1; BAB16893." evidence="5" ref="1">
    <original>S</original>
    <variation>P</variation>
    <location>
        <position position="279"/>
    </location>
</feature>
<sequence length="569" mass="62846">MYPKEEHSAGGISSSVNYLDGAYEYPNPTQTFGTSSPAEPASVGYYPAPPDPHEEHLQTLGGGSSSPLMFAPSSPQLSPYLSHHGGHHTTPHQVSYYLDSSSSTVYRSSVVSSQQAAVGLCEELCSATDRQELYTGSRAAGGFDSGKETRFCAVCSDYASGYHYGVWSCEGCKAFFKRSIQGHNDYVCPATNQCTIDRNRRKSCQACRLRKCYEVGMMKGGIRKDRGGRSVRRERRRSSNEDRDKSSSDQCSRAGVRTTGPQDKRKKRSGGVVSTLCMSPDQVLLLLLGAEPPAVCSRQKHSRPYTEITMMSLLTNMADKELVHMIAWAKKVPGFQDLSLHDQVQLLESSWLEVLMIGLIWRSIHSPGKLIFAQDLILDRSEGECVEGMAEIFDMLLATVARFRSLKLKLEEFVCLKAIILINSGAFSFCSSPVEPLMDNFMVQCMLDNITDALIYCISKSGASLQLQSRRQAQLLLLLSHIRHMSNKGMEHLYRMKCKNRVPLYDLLLEMLDAQRFQSSGKVQRVWSQSEKNPPSTPTTSSSSSNNSPRGGAAAIQSNGACHSHSPDP</sequence>
<dbReference type="EMBL" id="AB037185">
    <property type="protein sequence ID" value="BAB16893.1"/>
    <property type="molecule type" value="mRNA"/>
</dbReference>
<dbReference type="EMBL" id="AF349412">
    <property type="protein sequence ID" value="AAK16740.1"/>
    <property type="molecule type" value="mRNA"/>
</dbReference>
<dbReference type="RefSeq" id="NP_694491.1">
    <property type="nucleotide sequence ID" value="NM_152959.1"/>
</dbReference>
<dbReference type="SMR" id="P57717"/>
<dbReference type="FunCoup" id="P57717">
    <property type="interactions" value="1256"/>
</dbReference>
<dbReference type="STRING" id="7955.ENSDARP00000082277"/>
<dbReference type="PaxDb" id="7955-ENSDARP00000024987"/>
<dbReference type="GeneID" id="259252"/>
<dbReference type="KEGG" id="dre:259252"/>
<dbReference type="AGR" id="ZFIN:ZDB-GENE-020806-5"/>
<dbReference type="CTD" id="2099"/>
<dbReference type="ZFIN" id="ZDB-GENE-020806-5">
    <property type="gene designation" value="esr1"/>
</dbReference>
<dbReference type="eggNOG" id="KOG3575">
    <property type="taxonomic scope" value="Eukaryota"/>
</dbReference>
<dbReference type="InParanoid" id="P57717"/>
<dbReference type="OrthoDB" id="5799427at2759"/>
<dbReference type="Reactome" id="R-DRE-1251985">
    <property type="pathway name" value="Nuclear signaling by ERBB4"/>
</dbReference>
<dbReference type="Reactome" id="R-DRE-1257604">
    <property type="pathway name" value="PIP3 activates AKT signaling"/>
</dbReference>
<dbReference type="Reactome" id="R-DRE-5689896">
    <property type="pathway name" value="Ovarian tumor domain proteases"/>
</dbReference>
<dbReference type="Reactome" id="R-DRE-6811558">
    <property type="pathway name" value="PI5P, PP2A and IER3 Regulate PI3K/AKT Signaling"/>
</dbReference>
<dbReference type="Reactome" id="R-DRE-8939211">
    <property type="pathway name" value="ESR-mediated signaling"/>
</dbReference>
<dbReference type="Reactome" id="R-DRE-9009391">
    <property type="pathway name" value="Extra-nuclear estrogen signaling"/>
</dbReference>
<dbReference type="Reactome" id="R-DRE-9018519">
    <property type="pathway name" value="Estrogen-dependent gene expression"/>
</dbReference>
<dbReference type="Reactome" id="R-DRE-9841251">
    <property type="pathway name" value="Mitochondrial unfolded protein response (UPRmt)"/>
</dbReference>
<dbReference type="SignaLink" id="P57717"/>
<dbReference type="PRO" id="PR:P57717"/>
<dbReference type="Proteomes" id="UP000000437">
    <property type="component" value="Alternate scaffold 20"/>
</dbReference>
<dbReference type="Proteomes" id="UP000000437">
    <property type="component" value="Chromosome 20"/>
</dbReference>
<dbReference type="GO" id="GO:0000785">
    <property type="term" value="C:chromatin"/>
    <property type="evidence" value="ECO:0000318"/>
    <property type="project" value="GO_Central"/>
</dbReference>
<dbReference type="GO" id="GO:0005737">
    <property type="term" value="C:cytoplasm"/>
    <property type="evidence" value="ECO:0000250"/>
    <property type="project" value="UniProtKB"/>
</dbReference>
<dbReference type="GO" id="GO:0005634">
    <property type="term" value="C:nucleus"/>
    <property type="evidence" value="ECO:0000250"/>
    <property type="project" value="UniProtKB"/>
</dbReference>
<dbReference type="GO" id="GO:1903924">
    <property type="term" value="F:estradiol binding"/>
    <property type="evidence" value="ECO:0000314"/>
    <property type="project" value="ZFIN"/>
</dbReference>
<dbReference type="GO" id="GO:0034056">
    <property type="term" value="F:estrogen response element binding"/>
    <property type="evidence" value="ECO:0000318"/>
    <property type="project" value="GO_Central"/>
</dbReference>
<dbReference type="GO" id="GO:0030284">
    <property type="term" value="F:nuclear estrogen receptor activity"/>
    <property type="evidence" value="ECO:0000314"/>
    <property type="project" value="ZFIN"/>
</dbReference>
<dbReference type="GO" id="GO:0004879">
    <property type="term" value="F:nuclear receptor activity"/>
    <property type="evidence" value="ECO:0000314"/>
    <property type="project" value="ZFIN"/>
</dbReference>
<dbReference type="GO" id="GO:1990239">
    <property type="term" value="F:steroid hormone binding"/>
    <property type="evidence" value="ECO:0000314"/>
    <property type="project" value="ZFIN"/>
</dbReference>
<dbReference type="GO" id="GO:0008270">
    <property type="term" value="F:zinc ion binding"/>
    <property type="evidence" value="ECO:0007669"/>
    <property type="project" value="UniProtKB-KW"/>
</dbReference>
<dbReference type="GO" id="GO:0071391">
    <property type="term" value="P:cellular response to estrogen stimulus"/>
    <property type="evidence" value="ECO:0000314"/>
    <property type="project" value="ZFIN"/>
</dbReference>
<dbReference type="GO" id="GO:0030520">
    <property type="term" value="P:estrogen receptor signaling pathway"/>
    <property type="evidence" value="ECO:0000318"/>
    <property type="project" value="GO_Central"/>
</dbReference>
<dbReference type="GO" id="GO:0048920">
    <property type="term" value="P:posterior lateral line neuromast primordium migration"/>
    <property type="evidence" value="ECO:0000315"/>
    <property type="project" value="ZFIN"/>
</dbReference>
<dbReference type="GO" id="GO:0006357">
    <property type="term" value="P:regulation of transcription by RNA polymerase II"/>
    <property type="evidence" value="ECO:0000318"/>
    <property type="project" value="GO_Central"/>
</dbReference>
<dbReference type="GO" id="GO:0032355">
    <property type="term" value="P:response to estradiol"/>
    <property type="evidence" value="ECO:0000314"/>
    <property type="project" value="ZFIN"/>
</dbReference>
<dbReference type="GO" id="GO:0043627">
    <property type="term" value="P:response to estrogen"/>
    <property type="evidence" value="ECO:0000314"/>
    <property type="project" value="ZFIN"/>
</dbReference>
<dbReference type="GO" id="GO:0009410">
    <property type="term" value="P:response to xenobiotic stimulus"/>
    <property type="evidence" value="ECO:0000314"/>
    <property type="project" value="ZFIN"/>
</dbReference>
<dbReference type="CDD" id="cd07171">
    <property type="entry name" value="NR_DBD_ER"/>
    <property type="match status" value="1"/>
</dbReference>
<dbReference type="CDD" id="cd06949">
    <property type="entry name" value="NR_LBD_ER"/>
    <property type="match status" value="1"/>
</dbReference>
<dbReference type="FunFam" id="1.10.565.10:FF:000010">
    <property type="entry name" value="Estrogen receptor"/>
    <property type="match status" value="1"/>
</dbReference>
<dbReference type="FunFam" id="3.30.50.10:FF:000014">
    <property type="entry name" value="Estrogen receptor beta"/>
    <property type="match status" value="1"/>
</dbReference>
<dbReference type="Gene3D" id="3.30.50.10">
    <property type="entry name" value="Erythroid Transcription Factor GATA-1, subunit A"/>
    <property type="match status" value="1"/>
</dbReference>
<dbReference type="Gene3D" id="1.10.565.10">
    <property type="entry name" value="Retinoid X Receptor"/>
    <property type="match status" value="1"/>
</dbReference>
<dbReference type="InterPro" id="IPR024178">
    <property type="entry name" value="Est_rcpt/est-rel_rcp"/>
</dbReference>
<dbReference type="InterPro" id="IPR001292">
    <property type="entry name" value="Estr_rcpt"/>
</dbReference>
<dbReference type="InterPro" id="IPR046944">
    <property type="entry name" value="Estr_rcpt_N"/>
</dbReference>
<dbReference type="InterPro" id="IPR035500">
    <property type="entry name" value="NHR-like_dom_sf"/>
</dbReference>
<dbReference type="InterPro" id="IPR000536">
    <property type="entry name" value="Nucl_hrmn_rcpt_lig-bd"/>
</dbReference>
<dbReference type="InterPro" id="IPR050200">
    <property type="entry name" value="Nuclear_hormone_rcpt_NR3"/>
</dbReference>
<dbReference type="InterPro" id="IPR001723">
    <property type="entry name" value="Nuclear_hrmn_rcpt"/>
</dbReference>
<dbReference type="InterPro" id="IPR001628">
    <property type="entry name" value="Znf_hrmn_rcpt"/>
</dbReference>
<dbReference type="InterPro" id="IPR013088">
    <property type="entry name" value="Znf_NHR/GATA"/>
</dbReference>
<dbReference type="PANTHER" id="PTHR48092">
    <property type="entry name" value="KNIRPS-RELATED PROTEIN-RELATED"/>
    <property type="match status" value="1"/>
</dbReference>
<dbReference type="Pfam" id="PF00104">
    <property type="entry name" value="Hormone_recep"/>
    <property type="match status" value="1"/>
</dbReference>
<dbReference type="Pfam" id="PF02159">
    <property type="entry name" value="Oest_recep"/>
    <property type="match status" value="1"/>
</dbReference>
<dbReference type="Pfam" id="PF00105">
    <property type="entry name" value="zf-C4"/>
    <property type="match status" value="1"/>
</dbReference>
<dbReference type="PIRSF" id="PIRSF500101">
    <property type="entry name" value="ER-a"/>
    <property type="match status" value="1"/>
</dbReference>
<dbReference type="PIRSF" id="PIRSF002527">
    <property type="entry name" value="ER-like_NR"/>
    <property type="match status" value="1"/>
</dbReference>
<dbReference type="PRINTS" id="PR00398">
    <property type="entry name" value="STRDHORMONER"/>
</dbReference>
<dbReference type="PRINTS" id="PR00047">
    <property type="entry name" value="STROIDFINGER"/>
</dbReference>
<dbReference type="SMART" id="SM00430">
    <property type="entry name" value="HOLI"/>
    <property type="match status" value="1"/>
</dbReference>
<dbReference type="SMART" id="SM00399">
    <property type="entry name" value="ZnF_C4"/>
    <property type="match status" value="1"/>
</dbReference>
<dbReference type="SUPFAM" id="SSF57716">
    <property type="entry name" value="Glucocorticoid receptor-like (DNA-binding domain)"/>
    <property type="match status" value="1"/>
</dbReference>
<dbReference type="SUPFAM" id="SSF48508">
    <property type="entry name" value="Nuclear receptor ligand-binding domain"/>
    <property type="match status" value="1"/>
</dbReference>
<dbReference type="PROSITE" id="PS51843">
    <property type="entry name" value="NR_LBD"/>
    <property type="match status" value="1"/>
</dbReference>
<dbReference type="PROSITE" id="PS00031">
    <property type="entry name" value="NUCLEAR_REC_DBD_1"/>
    <property type="match status" value="1"/>
</dbReference>
<dbReference type="PROSITE" id="PS51030">
    <property type="entry name" value="NUCLEAR_REC_DBD_2"/>
    <property type="match status" value="1"/>
</dbReference>